<protein>
    <recommendedName>
        <fullName evidence="1">Lipoyl synthase</fullName>
        <ecNumber evidence="1">2.8.1.8</ecNumber>
    </recommendedName>
    <alternativeName>
        <fullName evidence="1">Lip-syn</fullName>
        <shortName evidence="1">LS</shortName>
    </alternativeName>
    <alternativeName>
        <fullName evidence="1">Lipoate synthase</fullName>
    </alternativeName>
    <alternativeName>
        <fullName evidence="1">Lipoic acid synthase</fullName>
    </alternativeName>
    <alternativeName>
        <fullName evidence="1">Sulfur insertion protein LipA</fullName>
    </alternativeName>
</protein>
<accession>Q5FNM1</accession>
<comment type="function">
    <text evidence="1">Catalyzes the radical-mediated insertion of two sulfur atoms into the C-6 and C-8 positions of the octanoyl moiety bound to the lipoyl domains of lipoate-dependent enzymes, thereby converting the octanoylated domains into lipoylated derivatives.</text>
</comment>
<comment type="catalytic activity">
    <reaction evidence="1">
        <text>[[Fe-S] cluster scaffold protein carrying a second [4Fe-4S](2+) cluster] + N(6)-octanoyl-L-lysyl-[protein] + 2 oxidized [2Fe-2S]-[ferredoxin] + 2 S-adenosyl-L-methionine + 4 H(+) = [[Fe-S] cluster scaffold protein] + N(6)-[(R)-dihydrolipoyl]-L-lysyl-[protein] + 4 Fe(3+) + 2 hydrogen sulfide + 2 5'-deoxyadenosine + 2 L-methionine + 2 reduced [2Fe-2S]-[ferredoxin]</text>
        <dbReference type="Rhea" id="RHEA:16585"/>
        <dbReference type="Rhea" id="RHEA-COMP:9928"/>
        <dbReference type="Rhea" id="RHEA-COMP:10000"/>
        <dbReference type="Rhea" id="RHEA-COMP:10001"/>
        <dbReference type="Rhea" id="RHEA-COMP:10475"/>
        <dbReference type="Rhea" id="RHEA-COMP:14568"/>
        <dbReference type="Rhea" id="RHEA-COMP:14569"/>
        <dbReference type="ChEBI" id="CHEBI:15378"/>
        <dbReference type="ChEBI" id="CHEBI:17319"/>
        <dbReference type="ChEBI" id="CHEBI:29034"/>
        <dbReference type="ChEBI" id="CHEBI:29919"/>
        <dbReference type="ChEBI" id="CHEBI:33722"/>
        <dbReference type="ChEBI" id="CHEBI:33737"/>
        <dbReference type="ChEBI" id="CHEBI:33738"/>
        <dbReference type="ChEBI" id="CHEBI:57844"/>
        <dbReference type="ChEBI" id="CHEBI:59789"/>
        <dbReference type="ChEBI" id="CHEBI:78809"/>
        <dbReference type="ChEBI" id="CHEBI:83100"/>
        <dbReference type="EC" id="2.8.1.8"/>
    </reaction>
</comment>
<comment type="cofactor">
    <cofactor evidence="1">
        <name>[4Fe-4S] cluster</name>
        <dbReference type="ChEBI" id="CHEBI:49883"/>
    </cofactor>
    <text evidence="1">Binds 2 [4Fe-4S] clusters per subunit. One cluster is coordinated with 3 cysteines and an exchangeable S-adenosyl-L-methionine.</text>
</comment>
<comment type="pathway">
    <text evidence="1">Protein modification; protein lipoylation via endogenous pathway; protein N(6)-(lipoyl)lysine from octanoyl-[acyl-carrier-protein]: step 2/2.</text>
</comment>
<comment type="subcellular location">
    <subcellularLocation>
        <location evidence="1">Cytoplasm</location>
    </subcellularLocation>
</comment>
<comment type="similarity">
    <text evidence="1">Belongs to the radical SAM superfamily. Lipoyl synthase family.</text>
</comment>
<feature type="chain" id="PRO_0000325258" description="Lipoyl synthase">
    <location>
        <begin position="1"/>
        <end position="322"/>
    </location>
</feature>
<feature type="domain" description="Radical SAM core" evidence="2">
    <location>
        <begin position="73"/>
        <end position="289"/>
    </location>
</feature>
<feature type="region of interest" description="Disordered" evidence="3">
    <location>
        <begin position="1"/>
        <end position="29"/>
    </location>
</feature>
<feature type="compositionally biased region" description="Basic and acidic residues" evidence="3">
    <location>
        <begin position="1"/>
        <end position="25"/>
    </location>
</feature>
<feature type="binding site" evidence="1">
    <location>
        <position position="61"/>
    </location>
    <ligand>
        <name>[4Fe-4S] cluster</name>
        <dbReference type="ChEBI" id="CHEBI:49883"/>
        <label>1</label>
    </ligand>
</feature>
<feature type="binding site" evidence="1">
    <location>
        <position position="66"/>
    </location>
    <ligand>
        <name>[4Fe-4S] cluster</name>
        <dbReference type="ChEBI" id="CHEBI:49883"/>
        <label>1</label>
    </ligand>
</feature>
<feature type="binding site" evidence="1">
    <location>
        <position position="72"/>
    </location>
    <ligand>
        <name>[4Fe-4S] cluster</name>
        <dbReference type="ChEBI" id="CHEBI:49883"/>
        <label>1</label>
    </ligand>
</feature>
<feature type="binding site" evidence="1">
    <location>
        <position position="87"/>
    </location>
    <ligand>
        <name>[4Fe-4S] cluster</name>
        <dbReference type="ChEBI" id="CHEBI:49883"/>
        <label>2</label>
        <note>4Fe-4S-S-AdoMet</note>
    </ligand>
</feature>
<feature type="binding site" evidence="1">
    <location>
        <position position="91"/>
    </location>
    <ligand>
        <name>[4Fe-4S] cluster</name>
        <dbReference type="ChEBI" id="CHEBI:49883"/>
        <label>2</label>
        <note>4Fe-4S-S-AdoMet</note>
    </ligand>
</feature>
<feature type="binding site" evidence="1">
    <location>
        <position position="94"/>
    </location>
    <ligand>
        <name>[4Fe-4S] cluster</name>
        <dbReference type="ChEBI" id="CHEBI:49883"/>
        <label>2</label>
        <note>4Fe-4S-S-AdoMet</note>
    </ligand>
</feature>
<feature type="binding site" evidence="1">
    <location>
        <position position="300"/>
    </location>
    <ligand>
        <name>[4Fe-4S] cluster</name>
        <dbReference type="ChEBI" id="CHEBI:49883"/>
        <label>1</label>
    </ligand>
</feature>
<sequence length="322" mass="35930">MSQRITIDHRSAPALRHPEKAHRPDNPIQRKPSWIRVKAPNHPVYHETRALMRDAGLVTVCEEAACPNIGECWSQRHATMMIMGEICTRACAFCNVTTGLPKHLDEDEPRRVGEAVAKLGLKHVVITSVDRDDLEDGGAMHFARVIHAIRETSPQTTIEILTPDFLRKDGALEVVVAARPDVFNHNIETIPRLYPTIRPGARYYQSVRLLDGVKKLDPSIFTKSGLMLGLGEERMEVAQVMDDFRIADVDFLTLGQYLQPSAKHAAVEKFVTPDEFDGYAAAARSKGFLQVSASPLTRSSYHADSDFAKLQAARNSRLKESL</sequence>
<evidence type="ECO:0000255" key="1">
    <source>
        <dbReference type="HAMAP-Rule" id="MF_00206"/>
    </source>
</evidence>
<evidence type="ECO:0000255" key="2">
    <source>
        <dbReference type="PROSITE-ProRule" id="PRU01266"/>
    </source>
</evidence>
<evidence type="ECO:0000256" key="3">
    <source>
        <dbReference type="SAM" id="MobiDB-lite"/>
    </source>
</evidence>
<gene>
    <name evidence="1" type="primary">lipA</name>
    <name type="ordered locus">GOX2293</name>
</gene>
<reference key="1">
    <citation type="journal article" date="2005" name="Nat. Biotechnol.">
        <title>Complete genome sequence of the acetic acid bacterium Gluconobacter oxydans.</title>
        <authorList>
            <person name="Prust C."/>
            <person name="Hoffmeister M."/>
            <person name="Liesegang H."/>
            <person name="Wiezer A."/>
            <person name="Fricke W.F."/>
            <person name="Ehrenreich A."/>
            <person name="Gottschalk G."/>
            <person name="Deppenmeier U."/>
        </authorList>
    </citation>
    <scope>NUCLEOTIDE SEQUENCE [LARGE SCALE GENOMIC DNA]</scope>
    <source>
        <strain>621H</strain>
    </source>
</reference>
<keyword id="KW-0004">4Fe-4S</keyword>
<keyword id="KW-0963">Cytoplasm</keyword>
<keyword id="KW-0408">Iron</keyword>
<keyword id="KW-0411">Iron-sulfur</keyword>
<keyword id="KW-0479">Metal-binding</keyword>
<keyword id="KW-1185">Reference proteome</keyword>
<keyword id="KW-0949">S-adenosyl-L-methionine</keyword>
<keyword id="KW-0808">Transferase</keyword>
<proteinExistence type="inferred from homology"/>
<name>LIPA_GLUOX</name>
<organism>
    <name type="scientific">Gluconobacter oxydans (strain 621H)</name>
    <name type="common">Gluconobacter suboxydans</name>
    <dbReference type="NCBI Taxonomy" id="290633"/>
    <lineage>
        <taxon>Bacteria</taxon>
        <taxon>Pseudomonadati</taxon>
        <taxon>Pseudomonadota</taxon>
        <taxon>Alphaproteobacteria</taxon>
        <taxon>Acetobacterales</taxon>
        <taxon>Acetobacteraceae</taxon>
        <taxon>Gluconobacter</taxon>
    </lineage>
</organism>
<dbReference type="EC" id="2.8.1.8" evidence="1"/>
<dbReference type="EMBL" id="CP000009">
    <property type="protein sequence ID" value="AAW62026.1"/>
    <property type="molecule type" value="Genomic_DNA"/>
</dbReference>
<dbReference type="RefSeq" id="WP_011253796.1">
    <property type="nucleotide sequence ID" value="NC_006677.1"/>
</dbReference>
<dbReference type="SMR" id="Q5FNM1"/>
<dbReference type="STRING" id="290633.GOX2293"/>
<dbReference type="KEGG" id="gox:GOX2293"/>
<dbReference type="eggNOG" id="COG0320">
    <property type="taxonomic scope" value="Bacteria"/>
</dbReference>
<dbReference type="HOGENOM" id="CLU_033144_2_1_5"/>
<dbReference type="UniPathway" id="UPA00538">
    <property type="reaction ID" value="UER00593"/>
</dbReference>
<dbReference type="Proteomes" id="UP000006375">
    <property type="component" value="Chromosome"/>
</dbReference>
<dbReference type="GO" id="GO:0005737">
    <property type="term" value="C:cytoplasm"/>
    <property type="evidence" value="ECO:0007669"/>
    <property type="project" value="UniProtKB-SubCell"/>
</dbReference>
<dbReference type="GO" id="GO:0051539">
    <property type="term" value="F:4 iron, 4 sulfur cluster binding"/>
    <property type="evidence" value="ECO:0007669"/>
    <property type="project" value="UniProtKB-UniRule"/>
</dbReference>
<dbReference type="GO" id="GO:0016992">
    <property type="term" value="F:lipoate synthase activity"/>
    <property type="evidence" value="ECO:0007669"/>
    <property type="project" value="UniProtKB-UniRule"/>
</dbReference>
<dbReference type="GO" id="GO:0046872">
    <property type="term" value="F:metal ion binding"/>
    <property type="evidence" value="ECO:0007669"/>
    <property type="project" value="UniProtKB-KW"/>
</dbReference>
<dbReference type="CDD" id="cd01335">
    <property type="entry name" value="Radical_SAM"/>
    <property type="match status" value="1"/>
</dbReference>
<dbReference type="FunFam" id="3.20.20.70:FF:000040">
    <property type="entry name" value="Lipoyl synthase"/>
    <property type="match status" value="1"/>
</dbReference>
<dbReference type="Gene3D" id="3.20.20.70">
    <property type="entry name" value="Aldolase class I"/>
    <property type="match status" value="1"/>
</dbReference>
<dbReference type="HAMAP" id="MF_00206">
    <property type="entry name" value="Lipoyl_synth"/>
    <property type="match status" value="1"/>
</dbReference>
<dbReference type="InterPro" id="IPR013785">
    <property type="entry name" value="Aldolase_TIM"/>
</dbReference>
<dbReference type="InterPro" id="IPR006638">
    <property type="entry name" value="Elp3/MiaA/NifB-like_rSAM"/>
</dbReference>
<dbReference type="InterPro" id="IPR003698">
    <property type="entry name" value="Lipoyl_synth"/>
</dbReference>
<dbReference type="InterPro" id="IPR007197">
    <property type="entry name" value="rSAM"/>
</dbReference>
<dbReference type="NCBIfam" id="TIGR00510">
    <property type="entry name" value="lipA"/>
    <property type="match status" value="1"/>
</dbReference>
<dbReference type="NCBIfam" id="NF004019">
    <property type="entry name" value="PRK05481.1"/>
    <property type="match status" value="1"/>
</dbReference>
<dbReference type="NCBIfam" id="NF009544">
    <property type="entry name" value="PRK12928.1"/>
    <property type="match status" value="1"/>
</dbReference>
<dbReference type="PANTHER" id="PTHR10949">
    <property type="entry name" value="LIPOYL SYNTHASE"/>
    <property type="match status" value="1"/>
</dbReference>
<dbReference type="PANTHER" id="PTHR10949:SF0">
    <property type="entry name" value="LIPOYL SYNTHASE, MITOCHONDRIAL"/>
    <property type="match status" value="1"/>
</dbReference>
<dbReference type="Pfam" id="PF04055">
    <property type="entry name" value="Radical_SAM"/>
    <property type="match status" value="1"/>
</dbReference>
<dbReference type="PIRSF" id="PIRSF005963">
    <property type="entry name" value="Lipoyl_synth"/>
    <property type="match status" value="1"/>
</dbReference>
<dbReference type="SFLD" id="SFLDF00271">
    <property type="entry name" value="lipoyl_synthase"/>
    <property type="match status" value="1"/>
</dbReference>
<dbReference type="SFLD" id="SFLDS00029">
    <property type="entry name" value="Radical_SAM"/>
    <property type="match status" value="1"/>
</dbReference>
<dbReference type="SMART" id="SM00729">
    <property type="entry name" value="Elp3"/>
    <property type="match status" value="1"/>
</dbReference>
<dbReference type="SUPFAM" id="SSF102114">
    <property type="entry name" value="Radical SAM enzymes"/>
    <property type="match status" value="1"/>
</dbReference>
<dbReference type="PROSITE" id="PS51918">
    <property type="entry name" value="RADICAL_SAM"/>
    <property type="match status" value="1"/>
</dbReference>